<dbReference type="EMBL" id="CP000792">
    <property type="protein sequence ID" value="ABV23520.1"/>
    <property type="molecule type" value="Genomic_DNA"/>
</dbReference>
<dbReference type="RefSeq" id="WP_002941639.1">
    <property type="nucleotide sequence ID" value="NC_009802.2"/>
</dbReference>
<dbReference type="SMR" id="A7ZG08"/>
<dbReference type="STRING" id="360104.CCC13826_2325"/>
<dbReference type="GeneID" id="28663431"/>
<dbReference type="KEGG" id="cco:CCC13826_2325"/>
<dbReference type="eggNOG" id="COG0185">
    <property type="taxonomic scope" value="Bacteria"/>
</dbReference>
<dbReference type="HOGENOM" id="CLU_144911_0_1_7"/>
<dbReference type="OrthoDB" id="9797833at2"/>
<dbReference type="Proteomes" id="UP000001121">
    <property type="component" value="Chromosome"/>
</dbReference>
<dbReference type="GO" id="GO:0005737">
    <property type="term" value="C:cytoplasm"/>
    <property type="evidence" value="ECO:0007669"/>
    <property type="project" value="UniProtKB-ARBA"/>
</dbReference>
<dbReference type="GO" id="GO:0015935">
    <property type="term" value="C:small ribosomal subunit"/>
    <property type="evidence" value="ECO:0007669"/>
    <property type="project" value="InterPro"/>
</dbReference>
<dbReference type="GO" id="GO:0019843">
    <property type="term" value="F:rRNA binding"/>
    <property type="evidence" value="ECO:0007669"/>
    <property type="project" value="UniProtKB-UniRule"/>
</dbReference>
<dbReference type="GO" id="GO:0003735">
    <property type="term" value="F:structural constituent of ribosome"/>
    <property type="evidence" value="ECO:0007669"/>
    <property type="project" value="InterPro"/>
</dbReference>
<dbReference type="GO" id="GO:0000028">
    <property type="term" value="P:ribosomal small subunit assembly"/>
    <property type="evidence" value="ECO:0007669"/>
    <property type="project" value="TreeGrafter"/>
</dbReference>
<dbReference type="GO" id="GO:0006412">
    <property type="term" value="P:translation"/>
    <property type="evidence" value="ECO:0007669"/>
    <property type="project" value="UniProtKB-UniRule"/>
</dbReference>
<dbReference type="FunFam" id="3.30.860.10:FF:000001">
    <property type="entry name" value="30S ribosomal protein S19"/>
    <property type="match status" value="1"/>
</dbReference>
<dbReference type="Gene3D" id="3.30.860.10">
    <property type="entry name" value="30s Ribosomal Protein S19, Chain A"/>
    <property type="match status" value="1"/>
</dbReference>
<dbReference type="HAMAP" id="MF_00531">
    <property type="entry name" value="Ribosomal_uS19"/>
    <property type="match status" value="1"/>
</dbReference>
<dbReference type="InterPro" id="IPR002222">
    <property type="entry name" value="Ribosomal_uS19"/>
</dbReference>
<dbReference type="InterPro" id="IPR005732">
    <property type="entry name" value="Ribosomal_uS19_bac-type"/>
</dbReference>
<dbReference type="InterPro" id="IPR020934">
    <property type="entry name" value="Ribosomal_uS19_CS"/>
</dbReference>
<dbReference type="InterPro" id="IPR023575">
    <property type="entry name" value="Ribosomal_uS19_SF"/>
</dbReference>
<dbReference type="NCBIfam" id="TIGR01050">
    <property type="entry name" value="rpsS_bact"/>
    <property type="match status" value="1"/>
</dbReference>
<dbReference type="PANTHER" id="PTHR11880">
    <property type="entry name" value="RIBOSOMAL PROTEIN S19P FAMILY MEMBER"/>
    <property type="match status" value="1"/>
</dbReference>
<dbReference type="PANTHER" id="PTHR11880:SF8">
    <property type="entry name" value="SMALL RIBOSOMAL SUBUNIT PROTEIN US19M"/>
    <property type="match status" value="1"/>
</dbReference>
<dbReference type="Pfam" id="PF00203">
    <property type="entry name" value="Ribosomal_S19"/>
    <property type="match status" value="1"/>
</dbReference>
<dbReference type="PIRSF" id="PIRSF002144">
    <property type="entry name" value="Ribosomal_S19"/>
    <property type="match status" value="1"/>
</dbReference>
<dbReference type="PRINTS" id="PR00975">
    <property type="entry name" value="RIBOSOMALS19"/>
</dbReference>
<dbReference type="SUPFAM" id="SSF54570">
    <property type="entry name" value="Ribosomal protein S19"/>
    <property type="match status" value="1"/>
</dbReference>
<dbReference type="PROSITE" id="PS00323">
    <property type="entry name" value="RIBOSOMAL_S19"/>
    <property type="match status" value="1"/>
</dbReference>
<accession>A7ZG08</accession>
<organism>
    <name type="scientific">Campylobacter concisus (strain 13826)</name>
    <dbReference type="NCBI Taxonomy" id="360104"/>
    <lineage>
        <taxon>Bacteria</taxon>
        <taxon>Pseudomonadati</taxon>
        <taxon>Campylobacterota</taxon>
        <taxon>Epsilonproteobacteria</taxon>
        <taxon>Campylobacterales</taxon>
        <taxon>Campylobacteraceae</taxon>
        <taxon>Campylobacter</taxon>
    </lineage>
</organism>
<evidence type="ECO:0000255" key="1">
    <source>
        <dbReference type="HAMAP-Rule" id="MF_00531"/>
    </source>
</evidence>
<evidence type="ECO:0000305" key="2"/>
<protein>
    <recommendedName>
        <fullName evidence="1">Small ribosomal subunit protein uS19</fullName>
    </recommendedName>
    <alternativeName>
        <fullName evidence="2">30S ribosomal protein S19</fullName>
    </alternativeName>
</protein>
<name>RS19_CAMC1</name>
<sequence>MARSLKKGPFVDDHVMKKVIAAKNANDNKPIKTWSRRSTIVPEMIGLTFNVHNGKSFIPVYVTENHIGYKLGEFAPTRTFKGHKGSVQKKIGK</sequence>
<feature type="chain" id="PRO_1000051029" description="Small ribosomal subunit protein uS19">
    <location>
        <begin position="1"/>
        <end position="93"/>
    </location>
</feature>
<gene>
    <name evidence="1" type="primary">rpsS</name>
    <name type="ordered locus">Ccon26_18810</name>
    <name type="ORF">CCC13826_2325</name>
</gene>
<proteinExistence type="inferred from homology"/>
<reference key="1">
    <citation type="submission" date="2007-10" db="EMBL/GenBank/DDBJ databases">
        <title>Genome sequence of Campylobacter concisus 13826 isolated from human feces.</title>
        <authorList>
            <person name="Fouts D.E."/>
            <person name="Mongodin E.F."/>
            <person name="Puiu D."/>
            <person name="Sebastian Y."/>
            <person name="Miller W.G."/>
            <person name="Mandrell R.E."/>
            <person name="On S."/>
            <person name="Nelson K.E."/>
        </authorList>
    </citation>
    <scope>NUCLEOTIDE SEQUENCE [LARGE SCALE GENOMIC DNA]</scope>
    <source>
        <strain>13826</strain>
    </source>
</reference>
<keyword id="KW-0687">Ribonucleoprotein</keyword>
<keyword id="KW-0689">Ribosomal protein</keyword>
<keyword id="KW-0694">RNA-binding</keyword>
<keyword id="KW-0699">rRNA-binding</keyword>
<comment type="function">
    <text evidence="1">Protein S19 forms a complex with S13 that binds strongly to the 16S ribosomal RNA.</text>
</comment>
<comment type="similarity">
    <text evidence="1">Belongs to the universal ribosomal protein uS19 family.</text>
</comment>